<dbReference type="EC" id="6.3.4.2" evidence="1"/>
<dbReference type="EMBL" id="AM406670">
    <property type="protein sequence ID" value="CAL94763.1"/>
    <property type="molecule type" value="Genomic_DNA"/>
</dbReference>
<dbReference type="RefSeq" id="WP_011765877.1">
    <property type="nucleotide sequence ID" value="NC_008702.1"/>
</dbReference>
<dbReference type="SMR" id="A1K7F8"/>
<dbReference type="STRING" id="62928.azo2146"/>
<dbReference type="KEGG" id="aoa:dqs_2279"/>
<dbReference type="KEGG" id="azo:azo2146"/>
<dbReference type="eggNOG" id="COG0504">
    <property type="taxonomic scope" value="Bacteria"/>
</dbReference>
<dbReference type="HOGENOM" id="CLU_011675_5_0_4"/>
<dbReference type="OrthoDB" id="9801107at2"/>
<dbReference type="UniPathway" id="UPA00159">
    <property type="reaction ID" value="UER00277"/>
</dbReference>
<dbReference type="Proteomes" id="UP000002588">
    <property type="component" value="Chromosome"/>
</dbReference>
<dbReference type="GO" id="GO:0005829">
    <property type="term" value="C:cytosol"/>
    <property type="evidence" value="ECO:0007669"/>
    <property type="project" value="TreeGrafter"/>
</dbReference>
<dbReference type="GO" id="GO:0005524">
    <property type="term" value="F:ATP binding"/>
    <property type="evidence" value="ECO:0007669"/>
    <property type="project" value="UniProtKB-KW"/>
</dbReference>
<dbReference type="GO" id="GO:0003883">
    <property type="term" value="F:CTP synthase activity"/>
    <property type="evidence" value="ECO:0007669"/>
    <property type="project" value="UniProtKB-UniRule"/>
</dbReference>
<dbReference type="GO" id="GO:0004359">
    <property type="term" value="F:glutaminase activity"/>
    <property type="evidence" value="ECO:0007669"/>
    <property type="project" value="RHEA"/>
</dbReference>
<dbReference type="GO" id="GO:0042802">
    <property type="term" value="F:identical protein binding"/>
    <property type="evidence" value="ECO:0007669"/>
    <property type="project" value="TreeGrafter"/>
</dbReference>
<dbReference type="GO" id="GO:0046872">
    <property type="term" value="F:metal ion binding"/>
    <property type="evidence" value="ECO:0007669"/>
    <property type="project" value="UniProtKB-KW"/>
</dbReference>
<dbReference type="GO" id="GO:0044210">
    <property type="term" value="P:'de novo' CTP biosynthetic process"/>
    <property type="evidence" value="ECO:0007669"/>
    <property type="project" value="UniProtKB-UniRule"/>
</dbReference>
<dbReference type="GO" id="GO:0019856">
    <property type="term" value="P:pyrimidine nucleobase biosynthetic process"/>
    <property type="evidence" value="ECO:0007669"/>
    <property type="project" value="TreeGrafter"/>
</dbReference>
<dbReference type="CDD" id="cd03113">
    <property type="entry name" value="CTPS_N"/>
    <property type="match status" value="1"/>
</dbReference>
<dbReference type="CDD" id="cd01746">
    <property type="entry name" value="GATase1_CTP_Synthase"/>
    <property type="match status" value="1"/>
</dbReference>
<dbReference type="FunFam" id="3.40.50.300:FF:000009">
    <property type="entry name" value="CTP synthase"/>
    <property type="match status" value="1"/>
</dbReference>
<dbReference type="FunFam" id="3.40.50.880:FF:000002">
    <property type="entry name" value="CTP synthase"/>
    <property type="match status" value="1"/>
</dbReference>
<dbReference type="Gene3D" id="3.40.50.880">
    <property type="match status" value="1"/>
</dbReference>
<dbReference type="Gene3D" id="3.40.50.300">
    <property type="entry name" value="P-loop containing nucleotide triphosphate hydrolases"/>
    <property type="match status" value="1"/>
</dbReference>
<dbReference type="HAMAP" id="MF_01227">
    <property type="entry name" value="PyrG"/>
    <property type="match status" value="1"/>
</dbReference>
<dbReference type="InterPro" id="IPR029062">
    <property type="entry name" value="Class_I_gatase-like"/>
</dbReference>
<dbReference type="InterPro" id="IPR004468">
    <property type="entry name" value="CTP_synthase"/>
</dbReference>
<dbReference type="InterPro" id="IPR017456">
    <property type="entry name" value="CTP_synthase_N"/>
</dbReference>
<dbReference type="InterPro" id="IPR017926">
    <property type="entry name" value="GATASE"/>
</dbReference>
<dbReference type="InterPro" id="IPR033828">
    <property type="entry name" value="GATase1_CTP_Synthase"/>
</dbReference>
<dbReference type="InterPro" id="IPR027417">
    <property type="entry name" value="P-loop_NTPase"/>
</dbReference>
<dbReference type="NCBIfam" id="NF003792">
    <property type="entry name" value="PRK05380.1"/>
    <property type="match status" value="1"/>
</dbReference>
<dbReference type="NCBIfam" id="TIGR00337">
    <property type="entry name" value="PyrG"/>
    <property type="match status" value="1"/>
</dbReference>
<dbReference type="PANTHER" id="PTHR11550">
    <property type="entry name" value="CTP SYNTHASE"/>
    <property type="match status" value="1"/>
</dbReference>
<dbReference type="PANTHER" id="PTHR11550:SF0">
    <property type="entry name" value="CTP SYNTHASE-RELATED"/>
    <property type="match status" value="1"/>
</dbReference>
<dbReference type="Pfam" id="PF06418">
    <property type="entry name" value="CTP_synth_N"/>
    <property type="match status" value="1"/>
</dbReference>
<dbReference type="Pfam" id="PF00117">
    <property type="entry name" value="GATase"/>
    <property type="match status" value="1"/>
</dbReference>
<dbReference type="SUPFAM" id="SSF52317">
    <property type="entry name" value="Class I glutamine amidotransferase-like"/>
    <property type="match status" value="1"/>
</dbReference>
<dbReference type="SUPFAM" id="SSF52540">
    <property type="entry name" value="P-loop containing nucleoside triphosphate hydrolases"/>
    <property type="match status" value="1"/>
</dbReference>
<dbReference type="PROSITE" id="PS51273">
    <property type="entry name" value="GATASE_TYPE_1"/>
    <property type="match status" value="1"/>
</dbReference>
<evidence type="ECO:0000255" key="1">
    <source>
        <dbReference type="HAMAP-Rule" id="MF_01227"/>
    </source>
</evidence>
<accession>A1K7F8</accession>
<gene>
    <name evidence="1" type="primary">pyrG</name>
    <name type="ordered locus">azo2146</name>
</gene>
<name>PYRG_AZOSB</name>
<organism>
    <name type="scientific">Azoarcus sp. (strain BH72)</name>
    <dbReference type="NCBI Taxonomy" id="418699"/>
    <lineage>
        <taxon>Bacteria</taxon>
        <taxon>Pseudomonadati</taxon>
        <taxon>Pseudomonadota</taxon>
        <taxon>Betaproteobacteria</taxon>
        <taxon>Rhodocyclales</taxon>
        <taxon>Zoogloeaceae</taxon>
        <taxon>Azoarcus</taxon>
    </lineage>
</organism>
<sequence>MTKYVFVTGGVVSSLGKGIAAASLGAILESRGIKVTHLKLDPYINVDPGTMSPFQHGEVFVTEDGAETDLDLGHYERFTSAKMSKRNNFTTGQIYEAVIKKERRGEYLGKTVQVIPHITDEIKSYVKRGAEGADVAIVEVGGTVGDIESLPFLEAIRQMGIEEGRNATCFIHLTLLPYIPTAGELKTKPTQHSVKELREIGIQPDILLCRADRSIPADERRKIALFCNVMPEAVIECLDADSIYKIPGQLHDQMLDEIVCHKLGILARAADLSVWENLIRALENPKQAVDIAFVGKYVDLTESYKSLIEALNHAGMHTESKVNIHYLDSEEIERSGCAVLEKMDAILVPGGFGKRGTEGKIAAIRYARENKVPYLGICLGMQLAVVEFARDVAGMAEAHSTEFERETPFPVIGLITEWADRSGKVEKRSEDSDLGGTMRLGGQVCKLADGTLAREVYGSGEIMERHRHRYEVNNTLLAQLEEKGLVVSGRAPVTDLCEMVELPADVHPWFVGCQFHPEFTSNPRKGHPLFTAYVKAAIARHSASRG</sequence>
<proteinExistence type="inferred from homology"/>
<keyword id="KW-0067">ATP-binding</keyword>
<keyword id="KW-0315">Glutamine amidotransferase</keyword>
<keyword id="KW-0436">Ligase</keyword>
<keyword id="KW-0460">Magnesium</keyword>
<keyword id="KW-0479">Metal-binding</keyword>
<keyword id="KW-0547">Nucleotide-binding</keyword>
<keyword id="KW-0665">Pyrimidine biosynthesis</keyword>
<keyword id="KW-1185">Reference proteome</keyword>
<protein>
    <recommendedName>
        <fullName evidence="1">CTP synthase</fullName>
        <ecNumber evidence="1">6.3.4.2</ecNumber>
    </recommendedName>
    <alternativeName>
        <fullName evidence="1">Cytidine 5'-triphosphate synthase</fullName>
    </alternativeName>
    <alternativeName>
        <fullName evidence="1">Cytidine triphosphate synthetase</fullName>
        <shortName evidence="1">CTP synthetase</shortName>
        <shortName evidence="1">CTPS</shortName>
    </alternativeName>
    <alternativeName>
        <fullName evidence="1">UTP--ammonia ligase</fullName>
    </alternativeName>
</protein>
<comment type="function">
    <text evidence="1">Catalyzes the ATP-dependent amination of UTP to CTP with either L-glutamine or ammonia as the source of nitrogen. Regulates intracellular CTP levels through interactions with the four ribonucleotide triphosphates.</text>
</comment>
<comment type="catalytic activity">
    <reaction evidence="1">
        <text>UTP + L-glutamine + ATP + H2O = CTP + L-glutamate + ADP + phosphate + 2 H(+)</text>
        <dbReference type="Rhea" id="RHEA:26426"/>
        <dbReference type="ChEBI" id="CHEBI:15377"/>
        <dbReference type="ChEBI" id="CHEBI:15378"/>
        <dbReference type="ChEBI" id="CHEBI:29985"/>
        <dbReference type="ChEBI" id="CHEBI:30616"/>
        <dbReference type="ChEBI" id="CHEBI:37563"/>
        <dbReference type="ChEBI" id="CHEBI:43474"/>
        <dbReference type="ChEBI" id="CHEBI:46398"/>
        <dbReference type="ChEBI" id="CHEBI:58359"/>
        <dbReference type="ChEBI" id="CHEBI:456216"/>
        <dbReference type="EC" id="6.3.4.2"/>
    </reaction>
</comment>
<comment type="catalytic activity">
    <reaction evidence="1">
        <text>L-glutamine + H2O = L-glutamate + NH4(+)</text>
        <dbReference type="Rhea" id="RHEA:15889"/>
        <dbReference type="ChEBI" id="CHEBI:15377"/>
        <dbReference type="ChEBI" id="CHEBI:28938"/>
        <dbReference type="ChEBI" id="CHEBI:29985"/>
        <dbReference type="ChEBI" id="CHEBI:58359"/>
    </reaction>
</comment>
<comment type="catalytic activity">
    <reaction evidence="1">
        <text>UTP + NH4(+) + ATP = CTP + ADP + phosphate + 2 H(+)</text>
        <dbReference type="Rhea" id="RHEA:16597"/>
        <dbReference type="ChEBI" id="CHEBI:15378"/>
        <dbReference type="ChEBI" id="CHEBI:28938"/>
        <dbReference type="ChEBI" id="CHEBI:30616"/>
        <dbReference type="ChEBI" id="CHEBI:37563"/>
        <dbReference type="ChEBI" id="CHEBI:43474"/>
        <dbReference type="ChEBI" id="CHEBI:46398"/>
        <dbReference type="ChEBI" id="CHEBI:456216"/>
    </reaction>
</comment>
<comment type="activity regulation">
    <text evidence="1">Allosterically activated by GTP, when glutamine is the substrate; GTP has no effect on the reaction when ammonia is the substrate. The allosteric effector GTP functions by stabilizing the protein conformation that binds the tetrahedral intermediate(s) formed during glutamine hydrolysis. Inhibited by the product CTP, via allosteric rather than competitive inhibition.</text>
</comment>
<comment type="pathway">
    <text evidence="1">Pyrimidine metabolism; CTP biosynthesis via de novo pathway; CTP from UDP: step 2/2.</text>
</comment>
<comment type="subunit">
    <text evidence="1">Homotetramer.</text>
</comment>
<comment type="miscellaneous">
    <text evidence="1">CTPSs have evolved a hybrid strategy for distinguishing between UTP and CTP. The overlapping regions of the product feedback inhibitory and substrate sites recognize a common feature in both compounds, the triphosphate moiety. To differentiate isosteric substrate and product pyrimidine rings, an additional pocket far from the expected kinase/ligase catalytic site, specifically recognizes the cytosine and ribose portions of the product inhibitor.</text>
</comment>
<comment type="similarity">
    <text evidence="1">Belongs to the CTP synthase family.</text>
</comment>
<feature type="chain" id="PRO_1000139376" description="CTP synthase">
    <location>
        <begin position="1"/>
        <end position="546"/>
    </location>
</feature>
<feature type="domain" description="Glutamine amidotransferase type-1" evidence="1">
    <location>
        <begin position="290"/>
        <end position="543"/>
    </location>
</feature>
<feature type="region of interest" description="Amidoligase domain" evidence="1">
    <location>
        <begin position="1"/>
        <end position="265"/>
    </location>
</feature>
<feature type="active site" description="Nucleophile; for glutamine hydrolysis" evidence="1">
    <location>
        <position position="378"/>
    </location>
</feature>
<feature type="active site" evidence="1">
    <location>
        <position position="516"/>
    </location>
</feature>
<feature type="active site" evidence="1">
    <location>
        <position position="518"/>
    </location>
</feature>
<feature type="binding site" evidence="1">
    <location>
        <position position="13"/>
    </location>
    <ligand>
        <name>CTP</name>
        <dbReference type="ChEBI" id="CHEBI:37563"/>
        <note>allosteric inhibitor</note>
    </ligand>
</feature>
<feature type="binding site" evidence="1">
    <location>
        <position position="13"/>
    </location>
    <ligand>
        <name>UTP</name>
        <dbReference type="ChEBI" id="CHEBI:46398"/>
    </ligand>
</feature>
<feature type="binding site" evidence="1">
    <location>
        <begin position="14"/>
        <end position="19"/>
    </location>
    <ligand>
        <name>ATP</name>
        <dbReference type="ChEBI" id="CHEBI:30616"/>
    </ligand>
</feature>
<feature type="binding site" evidence="1">
    <location>
        <position position="71"/>
    </location>
    <ligand>
        <name>ATP</name>
        <dbReference type="ChEBI" id="CHEBI:30616"/>
    </ligand>
</feature>
<feature type="binding site" evidence="1">
    <location>
        <position position="71"/>
    </location>
    <ligand>
        <name>Mg(2+)</name>
        <dbReference type="ChEBI" id="CHEBI:18420"/>
    </ligand>
</feature>
<feature type="binding site" evidence="1">
    <location>
        <position position="139"/>
    </location>
    <ligand>
        <name>Mg(2+)</name>
        <dbReference type="ChEBI" id="CHEBI:18420"/>
    </ligand>
</feature>
<feature type="binding site" evidence="1">
    <location>
        <begin position="146"/>
        <end position="148"/>
    </location>
    <ligand>
        <name>CTP</name>
        <dbReference type="ChEBI" id="CHEBI:37563"/>
        <note>allosteric inhibitor</note>
    </ligand>
</feature>
<feature type="binding site" evidence="1">
    <location>
        <begin position="186"/>
        <end position="191"/>
    </location>
    <ligand>
        <name>CTP</name>
        <dbReference type="ChEBI" id="CHEBI:37563"/>
        <note>allosteric inhibitor</note>
    </ligand>
</feature>
<feature type="binding site" evidence="1">
    <location>
        <begin position="186"/>
        <end position="191"/>
    </location>
    <ligand>
        <name>UTP</name>
        <dbReference type="ChEBI" id="CHEBI:46398"/>
    </ligand>
</feature>
<feature type="binding site" evidence="1">
    <location>
        <position position="222"/>
    </location>
    <ligand>
        <name>CTP</name>
        <dbReference type="ChEBI" id="CHEBI:37563"/>
        <note>allosteric inhibitor</note>
    </ligand>
</feature>
<feature type="binding site" evidence="1">
    <location>
        <position position="222"/>
    </location>
    <ligand>
        <name>UTP</name>
        <dbReference type="ChEBI" id="CHEBI:46398"/>
    </ligand>
</feature>
<feature type="binding site" evidence="1">
    <location>
        <position position="351"/>
    </location>
    <ligand>
        <name>L-glutamine</name>
        <dbReference type="ChEBI" id="CHEBI:58359"/>
    </ligand>
</feature>
<feature type="binding site" evidence="1">
    <location>
        <begin position="379"/>
        <end position="382"/>
    </location>
    <ligand>
        <name>L-glutamine</name>
        <dbReference type="ChEBI" id="CHEBI:58359"/>
    </ligand>
</feature>
<feature type="binding site" evidence="1">
    <location>
        <position position="402"/>
    </location>
    <ligand>
        <name>L-glutamine</name>
        <dbReference type="ChEBI" id="CHEBI:58359"/>
    </ligand>
</feature>
<feature type="binding site" evidence="1">
    <location>
        <position position="469"/>
    </location>
    <ligand>
        <name>L-glutamine</name>
        <dbReference type="ChEBI" id="CHEBI:58359"/>
    </ligand>
</feature>
<reference key="1">
    <citation type="journal article" date="2006" name="Nat. Biotechnol.">
        <title>Complete genome of the mutualistic, N2-fixing grass endophyte Azoarcus sp. strain BH72.</title>
        <authorList>
            <person name="Krause A."/>
            <person name="Ramakumar A."/>
            <person name="Bartels D."/>
            <person name="Battistoni F."/>
            <person name="Bekel T."/>
            <person name="Boch J."/>
            <person name="Boehm M."/>
            <person name="Friedrich F."/>
            <person name="Hurek T."/>
            <person name="Krause L."/>
            <person name="Linke B."/>
            <person name="McHardy A.C."/>
            <person name="Sarkar A."/>
            <person name="Schneiker S."/>
            <person name="Syed A.A."/>
            <person name="Thauer R."/>
            <person name="Vorhoelter F.-J."/>
            <person name="Weidner S."/>
            <person name="Puehler A."/>
            <person name="Reinhold-Hurek B."/>
            <person name="Kaiser O."/>
            <person name="Goesmann A."/>
        </authorList>
    </citation>
    <scope>NUCLEOTIDE SEQUENCE [LARGE SCALE GENOMIC DNA]</scope>
    <source>
        <strain>BH72</strain>
    </source>
</reference>